<dbReference type="EMBL" id="AE004091">
    <property type="protein sequence ID" value="AAG04688.1"/>
    <property type="molecule type" value="Genomic_DNA"/>
</dbReference>
<dbReference type="PIR" id="F83483">
    <property type="entry name" value="F83483"/>
</dbReference>
<dbReference type="RefSeq" id="NP_249990.1">
    <property type="nucleotide sequence ID" value="NC_002516.2"/>
</dbReference>
<dbReference type="RefSeq" id="WP_003082662.1">
    <property type="nucleotide sequence ID" value="NZ_QZGE01000005.1"/>
</dbReference>
<dbReference type="FunCoup" id="Q9I445">
    <property type="interactions" value="47"/>
</dbReference>
<dbReference type="STRING" id="208964.PA1299"/>
<dbReference type="PaxDb" id="208964-PA1299"/>
<dbReference type="DNASU" id="881499"/>
<dbReference type="GeneID" id="881499"/>
<dbReference type="KEGG" id="pae:PA1299"/>
<dbReference type="PATRIC" id="fig|208964.12.peg.1350"/>
<dbReference type="PseudoCAP" id="PA1299"/>
<dbReference type="HOGENOM" id="CLU_109769_0_1_6"/>
<dbReference type="InParanoid" id="Q9I445"/>
<dbReference type="OrthoDB" id="9786855at2"/>
<dbReference type="PhylomeDB" id="Q9I445"/>
<dbReference type="BioCyc" id="PAER208964:G1FZ6-1324-MONOMER"/>
<dbReference type="Proteomes" id="UP000002438">
    <property type="component" value="Chromosome"/>
</dbReference>
<dbReference type="HAMAP" id="MF_00676">
    <property type="entry name" value="UPF0260"/>
    <property type="match status" value="1"/>
</dbReference>
<dbReference type="InterPro" id="IPR005358">
    <property type="entry name" value="Puta_zinc/iron-chelating_dom"/>
</dbReference>
<dbReference type="InterPro" id="IPR008228">
    <property type="entry name" value="UCP006173"/>
</dbReference>
<dbReference type="NCBIfam" id="NF003501">
    <property type="entry name" value="PRK05170.1-5"/>
    <property type="match status" value="1"/>
</dbReference>
<dbReference type="NCBIfam" id="NF003502">
    <property type="entry name" value="PRK05170.1-6"/>
    <property type="match status" value="1"/>
</dbReference>
<dbReference type="NCBIfam" id="NF003507">
    <property type="entry name" value="PRK05170.2-5"/>
    <property type="match status" value="1"/>
</dbReference>
<dbReference type="PANTHER" id="PTHR37421">
    <property type="entry name" value="UPF0260 PROTEIN YCGN"/>
    <property type="match status" value="1"/>
</dbReference>
<dbReference type="PANTHER" id="PTHR37421:SF1">
    <property type="entry name" value="UPF0260 PROTEIN YCGN"/>
    <property type="match status" value="1"/>
</dbReference>
<dbReference type="Pfam" id="PF03692">
    <property type="entry name" value="CxxCxxCC"/>
    <property type="match status" value="1"/>
</dbReference>
<dbReference type="PIRSF" id="PIRSF006173">
    <property type="entry name" value="UCP006173"/>
    <property type="match status" value="1"/>
</dbReference>
<proteinExistence type="inferred from homology"/>
<comment type="similarity">
    <text evidence="1">Belongs to the UPF0260 family.</text>
</comment>
<name>Y1299_PSEAE</name>
<accession>Q9I445</accession>
<organism>
    <name type="scientific">Pseudomonas aeruginosa (strain ATCC 15692 / DSM 22644 / CIP 104116 / JCM 14847 / LMG 12228 / 1C / PRS 101 / PAO1)</name>
    <dbReference type="NCBI Taxonomy" id="208964"/>
    <lineage>
        <taxon>Bacteria</taxon>
        <taxon>Pseudomonadati</taxon>
        <taxon>Pseudomonadota</taxon>
        <taxon>Gammaproteobacteria</taxon>
        <taxon>Pseudomonadales</taxon>
        <taxon>Pseudomonadaceae</taxon>
        <taxon>Pseudomonas</taxon>
    </lineage>
</organism>
<reference key="1">
    <citation type="journal article" date="2000" name="Nature">
        <title>Complete genome sequence of Pseudomonas aeruginosa PAO1, an opportunistic pathogen.</title>
        <authorList>
            <person name="Stover C.K."/>
            <person name="Pham X.-Q.T."/>
            <person name="Erwin A.L."/>
            <person name="Mizoguchi S.D."/>
            <person name="Warrener P."/>
            <person name="Hickey M.J."/>
            <person name="Brinkman F.S.L."/>
            <person name="Hufnagle W.O."/>
            <person name="Kowalik D.J."/>
            <person name="Lagrou M."/>
            <person name="Garber R.L."/>
            <person name="Goltry L."/>
            <person name="Tolentino E."/>
            <person name="Westbrock-Wadman S."/>
            <person name="Yuan Y."/>
            <person name="Brody L.L."/>
            <person name="Coulter S.N."/>
            <person name="Folger K.R."/>
            <person name="Kas A."/>
            <person name="Larbig K."/>
            <person name="Lim R.M."/>
            <person name="Smith K.A."/>
            <person name="Spencer D.H."/>
            <person name="Wong G.K.-S."/>
            <person name="Wu Z."/>
            <person name="Paulsen I.T."/>
            <person name="Reizer J."/>
            <person name="Saier M.H. Jr."/>
            <person name="Hancock R.E.W."/>
            <person name="Lory S."/>
            <person name="Olson M.V."/>
        </authorList>
    </citation>
    <scope>NUCLEOTIDE SEQUENCE [LARGE SCALE GENOMIC DNA]</scope>
    <source>
        <strain>ATCC 15692 / DSM 22644 / CIP 104116 / JCM 14847 / LMG 12228 / 1C / PRS 101 / PAO1</strain>
    </source>
</reference>
<feature type="chain" id="PRO_0000214585" description="UPF0260 protein PA1299">
    <location>
        <begin position="1"/>
        <end position="149"/>
    </location>
</feature>
<gene>
    <name type="ordered locus">PA1299</name>
</gene>
<protein>
    <recommendedName>
        <fullName evidence="1">UPF0260 protein PA1299</fullName>
    </recommendedName>
</protein>
<evidence type="ECO:0000255" key="1">
    <source>
        <dbReference type="HAMAP-Rule" id="MF_00676"/>
    </source>
</evidence>
<keyword id="KW-1185">Reference proteome</keyword>
<sequence>MAAKVEPFWKRKTLAQLDQDEWESLCDGCGLCCLQKLEDEDDGSVYYTRIACKLLDLQSCRCTNYAERIRFVPDCIQLTPAQADEFQWLPPTCGYRLVAEGKDLPLWHHLVCGDPERVHKERISQSGRMLSETQVAEDDWEDYLIFRAG</sequence>